<comment type="function">
    <text evidence="1">Component of the small ribosomal subunit. Part of the small subunit (SSU) processome, first precursor of the small eukaryotic ribosomal subunit. During the assembly of the SSU processome in the nucleolus, many ribosome biogenesis factors, an RNA chaperone and ribosomal proteins associate with the nascent pre-rRNA and work in concert to generate RNA folding, modifications, rearrangements and cleavage as well as targeted degradation of pre-ribosomal RNA by the RNA exosome. Required for proper erythropoiesis.</text>
</comment>
<comment type="subunit">
    <text evidence="1">Component of the 40S ribosomal subunit. Part of the small subunit (SSU) processome, composed of more than 70 proteins and the RNA chaperone small nucleolar RNA (snoRNA) U3.</text>
</comment>
<comment type="subcellular location">
    <subcellularLocation>
        <location evidence="1">Cytoplasm</location>
    </subcellularLocation>
    <subcellularLocation>
        <location evidence="1">Nucleus</location>
        <location evidence="1">Nucleolus</location>
    </subcellularLocation>
</comment>
<comment type="similarity">
    <text evidence="3">Belongs to the universal ribosomal protein uS8 family.</text>
</comment>
<proteinExistence type="evidence at transcript level"/>
<name>RS15A_BOVIN</name>
<sequence length="130" mass="14840">MVRMNVLADALKSINNAEKRGKRQVLIRPCSKVIVRFLTVMMKHGYIGEFEIIDDHRAGKIVVNLTGRLNKCGVISPRFDVQLKDLEKWQNNLLPSRQFGFIVLTTSAGIMDHEEARRKHTGGKILGFFF</sequence>
<accession>Q76I82</accession>
<feature type="chain" id="PRO_0000273558" description="Small ribosomal subunit protein uS8">
    <location>
        <begin position="1"/>
        <end position="130"/>
    </location>
</feature>
<feature type="modified residue" description="N6-succinyllysine" evidence="2">
    <location>
        <position position="88"/>
    </location>
</feature>
<keyword id="KW-0963">Cytoplasm</keyword>
<keyword id="KW-0539">Nucleus</keyword>
<keyword id="KW-1185">Reference proteome</keyword>
<keyword id="KW-0687">Ribonucleoprotein</keyword>
<keyword id="KW-0689">Ribosomal protein</keyword>
<gene>
    <name type="primary">RPS15A</name>
</gene>
<dbReference type="EMBL" id="AB099015">
    <property type="protein sequence ID" value="BAC56505.1"/>
    <property type="molecule type" value="mRNA"/>
</dbReference>
<dbReference type="EMBL" id="BC108231">
    <property type="protein sequence ID" value="AAI08232.1"/>
    <property type="molecule type" value="mRNA"/>
</dbReference>
<dbReference type="RefSeq" id="NP_001032520.1">
    <property type="nucleotide sequence ID" value="NM_001037443.2"/>
</dbReference>
<dbReference type="RefSeq" id="XP_005224750.1">
    <property type="nucleotide sequence ID" value="XM_005224693.2"/>
</dbReference>
<dbReference type="RefSeq" id="XP_059737146.1">
    <property type="nucleotide sequence ID" value="XM_059881163.1"/>
</dbReference>
<dbReference type="SMR" id="Q76I82"/>
<dbReference type="FunCoup" id="Q76I82">
    <property type="interactions" value="2251"/>
</dbReference>
<dbReference type="STRING" id="9913.ENSBTAP00000027627"/>
<dbReference type="PaxDb" id="9913-ENSBTAP00000027627"/>
<dbReference type="Ensembl" id="ENSBTAT00000027627.3">
    <property type="protein sequence ID" value="ENSBTAP00000027627.2"/>
    <property type="gene ID" value="ENSBTAG00000020733.3"/>
</dbReference>
<dbReference type="GeneID" id="337888"/>
<dbReference type="KEGG" id="bta:337888"/>
<dbReference type="CTD" id="6210"/>
<dbReference type="VEuPathDB" id="HostDB:ENSBTAG00000020733"/>
<dbReference type="VEuPathDB" id="HostDB:ENSBTAG00000037600"/>
<dbReference type="VEuPathDB" id="HostDB:ENSBTAG00000054615"/>
<dbReference type="eggNOG" id="KOG1754">
    <property type="taxonomic scope" value="Eukaryota"/>
</dbReference>
<dbReference type="GeneTree" id="ENSGT00950000183198"/>
<dbReference type="HOGENOM" id="CLU_098428_1_1_1"/>
<dbReference type="InParanoid" id="Q76I82"/>
<dbReference type="OMA" id="IGDMEKW"/>
<dbReference type="OrthoDB" id="9774078at2759"/>
<dbReference type="TreeFam" id="TF300067"/>
<dbReference type="Reactome" id="R-BTA-156827">
    <property type="pathway name" value="L13a-mediated translational silencing of Ceruloplasmin expression"/>
</dbReference>
<dbReference type="Reactome" id="R-BTA-1799339">
    <property type="pathway name" value="SRP-dependent cotranslational protein targeting to membrane"/>
</dbReference>
<dbReference type="Reactome" id="R-BTA-6791226">
    <property type="pathway name" value="Major pathway of rRNA processing in the nucleolus and cytosol"/>
</dbReference>
<dbReference type="Reactome" id="R-BTA-72649">
    <property type="pathway name" value="Translation initiation complex formation"/>
</dbReference>
<dbReference type="Reactome" id="R-BTA-72689">
    <property type="pathway name" value="Formation of a pool of free 40S subunits"/>
</dbReference>
<dbReference type="Reactome" id="R-BTA-72695">
    <property type="pathway name" value="Formation of the ternary complex, and subsequently, the 43S complex"/>
</dbReference>
<dbReference type="Reactome" id="R-BTA-72702">
    <property type="pathway name" value="Ribosomal scanning and start codon recognition"/>
</dbReference>
<dbReference type="Reactome" id="R-BTA-72706">
    <property type="pathway name" value="GTP hydrolysis and joining of the 60S ribosomal subunit"/>
</dbReference>
<dbReference type="Reactome" id="R-BTA-975956">
    <property type="pathway name" value="Nonsense Mediated Decay (NMD) independent of the Exon Junction Complex (EJC)"/>
</dbReference>
<dbReference type="Reactome" id="R-BTA-975957">
    <property type="pathway name" value="Nonsense Mediated Decay (NMD) enhanced by the Exon Junction Complex (EJC)"/>
</dbReference>
<dbReference type="Proteomes" id="UP000009136">
    <property type="component" value="Chromosome 25"/>
</dbReference>
<dbReference type="Bgee" id="ENSBTAG00000020733">
    <property type="expression patterns" value="Expressed in myometrium and 107 other cell types or tissues"/>
</dbReference>
<dbReference type="GO" id="GO:0022627">
    <property type="term" value="C:cytosolic small ribosomal subunit"/>
    <property type="evidence" value="ECO:0000318"/>
    <property type="project" value="GO_Central"/>
</dbReference>
<dbReference type="GO" id="GO:0005730">
    <property type="term" value="C:nucleolus"/>
    <property type="evidence" value="ECO:0007669"/>
    <property type="project" value="UniProtKB-SubCell"/>
</dbReference>
<dbReference type="GO" id="GO:0032040">
    <property type="term" value="C:small-subunit processome"/>
    <property type="evidence" value="ECO:0000250"/>
    <property type="project" value="UniProtKB"/>
</dbReference>
<dbReference type="GO" id="GO:0003735">
    <property type="term" value="F:structural constituent of ribosome"/>
    <property type="evidence" value="ECO:0000318"/>
    <property type="project" value="GO_Central"/>
</dbReference>
<dbReference type="GO" id="GO:0045787">
    <property type="term" value="P:positive regulation of cell cycle"/>
    <property type="evidence" value="ECO:0007669"/>
    <property type="project" value="Ensembl"/>
</dbReference>
<dbReference type="GO" id="GO:0008284">
    <property type="term" value="P:positive regulation of cell population proliferation"/>
    <property type="evidence" value="ECO:0007669"/>
    <property type="project" value="Ensembl"/>
</dbReference>
<dbReference type="GO" id="GO:0009615">
    <property type="term" value="P:response to virus"/>
    <property type="evidence" value="ECO:0007669"/>
    <property type="project" value="Ensembl"/>
</dbReference>
<dbReference type="GO" id="GO:0042274">
    <property type="term" value="P:ribosomal small subunit biogenesis"/>
    <property type="evidence" value="ECO:0000250"/>
    <property type="project" value="UniProtKB"/>
</dbReference>
<dbReference type="GO" id="GO:0006412">
    <property type="term" value="P:translation"/>
    <property type="evidence" value="ECO:0007669"/>
    <property type="project" value="InterPro"/>
</dbReference>
<dbReference type="FunFam" id="3.30.1370.30:FF:000001">
    <property type="entry name" value="40S ribosomal protein S15a"/>
    <property type="match status" value="1"/>
</dbReference>
<dbReference type="FunFam" id="3.30.1490.10:FF:000002">
    <property type="entry name" value="40S ribosomal protein S15a"/>
    <property type="match status" value="1"/>
</dbReference>
<dbReference type="Gene3D" id="3.30.1370.30">
    <property type="match status" value="1"/>
</dbReference>
<dbReference type="Gene3D" id="3.30.1490.10">
    <property type="match status" value="1"/>
</dbReference>
<dbReference type="HAMAP" id="MF_01302_A">
    <property type="entry name" value="Ribosomal_uS8_A"/>
    <property type="match status" value="1"/>
</dbReference>
<dbReference type="InterPro" id="IPR000630">
    <property type="entry name" value="Ribosomal_uS8"/>
</dbReference>
<dbReference type="InterPro" id="IPR047863">
    <property type="entry name" value="Ribosomal_uS8_CS"/>
</dbReference>
<dbReference type="InterPro" id="IPR035987">
    <property type="entry name" value="Ribosomal_uS8_sf"/>
</dbReference>
<dbReference type="NCBIfam" id="NF003115">
    <property type="entry name" value="PRK04034.1"/>
    <property type="match status" value="1"/>
</dbReference>
<dbReference type="PANTHER" id="PTHR11758">
    <property type="entry name" value="40S RIBOSOMAL PROTEIN S15A"/>
    <property type="match status" value="1"/>
</dbReference>
<dbReference type="Pfam" id="PF00410">
    <property type="entry name" value="Ribosomal_S8"/>
    <property type="match status" value="1"/>
</dbReference>
<dbReference type="SUPFAM" id="SSF56047">
    <property type="entry name" value="Ribosomal protein S8"/>
    <property type="match status" value="1"/>
</dbReference>
<dbReference type="PROSITE" id="PS00053">
    <property type="entry name" value="RIBOSOMAL_S8"/>
    <property type="match status" value="1"/>
</dbReference>
<reference key="1">
    <citation type="journal article" date="2003" name="Mol. Reprod. Dev.">
        <title>Characterization of gene expression profiles in early bovine pregnancy using a custom cDNA microarray.</title>
        <authorList>
            <person name="Ishiwata H."/>
            <person name="Katsuma S."/>
            <person name="Kizaki K."/>
            <person name="Patel O.V."/>
            <person name="Nakano H."/>
            <person name="Takahashi T."/>
            <person name="Imai K."/>
            <person name="Hirasawa A."/>
            <person name="Shiojima S."/>
            <person name="Ikawa H."/>
            <person name="Suzuki Y."/>
            <person name="Tsujimoto G."/>
            <person name="Izaike Y."/>
            <person name="Todoroki J."/>
            <person name="Hashizume K."/>
        </authorList>
    </citation>
    <scope>NUCLEOTIDE SEQUENCE [MRNA]</scope>
    <source>
        <strain>Japanese black</strain>
        <tissue>Endometrium</tissue>
        <tissue>Placenta</tissue>
        <tissue>Uterus</tissue>
    </source>
</reference>
<reference key="2">
    <citation type="submission" date="2005-10" db="EMBL/GenBank/DDBJ databases">
        <authorList>
            <consortium name="NIH - Mammalian Gene Collection (MGC) project"/>
        </authorList>
    </citation>
    <scope>NUCLEOTIDE SEQUENCE [LARGE SCALE MRNA]</scope>
    <source>
        <strain>Crossbred X Angus</strain>
        <tissue>Liver</tissue>
    </source>
</reference>
<organism>
    <name type="scientific">Bos taurus</name>
    <name type="common">Bovine</name>
    <dbReference type="NCBI Taxonomy" id="9913"/>
    <lineage>
        <taxon>Eukaryota</taxon>
        <taxon>Metazoa</taxon>
        <taxon>Chordata</taxon>
        <taxon>Craniata</taxon>
        <taxon>Vertebrata</taxon>
        <taxon>Euteleostomi</taxon>
        <taxon>Mammalia</taxon>
        <taxon>Eutheria</taxon>
        <taxon>Laurasiatheria</taxon>
        <taxon>Artiodactyla</taxon>
        <taxon>Ruminantia</taxon>
        <taxon>Pecora</taxon>
        <taxon>Bovidae</taxon>
        <taxon>Bovinae</taxon>
        <taxon>Bos</taxon>
    </lineage>
</organism>
<protein>
    <recommendedName>
        <fullName evidence="3">Small ribosomal subunit protein uS8</fullName>
    </recommendedName>
    <alternativeName>
        <fullName>40S ribosomal protein S15a</fullName>
    </alternativeName>
</protein>
<evidence type="ECO:0000250" key="1">
    <source>
        <dbReference type="UniProtKB" id="P62244"/>
    </source>
</evidence>
<evidence type="ECO:0000250" key="2">
    <source>
        <dbReference type="UniProtKB" id="P62245"/>
    </source>
</evidence>
<evidence type="ECO:0000305" key="3"/>